<comment type="similarity">
    <text evidence="2">Belongs to the histone H2B family.</text>
</comment>
<comment type="caution">
    <text evidence="2">In contrast to other members of the histone H2B family, this protein is much longer and has a highly divergent N-terminus. It is therefore unclear whether it is a real histone.</text>
</comment>
<evidence type="ECO:0000256" key="1">
    <source>
        <dbReference type="SAM" id="MobiDB-lite"/>
    </source>
</evidence>
<evidence type="ECO:0000305" key="2"/>
<reference key="1">
    <citation type="journal article" date="2002" name="Nature">
        <title>Sequence and analysis of chromosome 2 of Dictyostelium discoideum.</title>
        <authorList>
            <person name="Gloeckner G."/>
            <person name="Eichinger L."/>
            <person name="Szafranski K."/>
            <person name="Pachebat J.A."/>
            <person name="Bankier A.T."/>
            <person name="Dear P.H."/>
            <person name="Lehmann R."/>
            <person name="Baumgart C."/>
            <person name="Parra G."/>
            <person name="Abril J.F."/>
            <person name="Guigo R."/>
            <person name="Kumpf K."/>
            <person name="Tunggal B."/>
            <person name="Cox E.C."/>
            <person name="Quail M.A."/>
            <person name="Platzer M."/>
            <person name="Rosenthal A."/>
            <person name="Noegel A.A."/>
        </authorList>
    </citation>
    <scope>NUCLEOTIDE SEQUENCE [LARGE SCALE GENOMIC DNA]</scope>
    <source>
        <strain>AX4</strain>
    </source>
</reference>
<reference key="2">
    <citation type="journal article" date="2005" name="Nature">
        <title>The genome of the social amoeba Dictyostelium discoideum.</title>
        <authorList>
            <person name="Eichinger L."/>
            <person name="Pachebat J.A."/>
            <person name="Gloeckner G."/>
            <person name="Rajandream M.A."/>
            <person name="Sucgang R."/>
            <person name="Berriman M."/>
            <person name="Song J."/>
            <person name="Olsen R."/>
            <person name="Szafranski K."/>
            <person name="Xu Q."/>
            <person name="Tunggal B."/>
            <person name="Kummerfeld S."/>
            <person name="Madera M."/>
            <person name="Konfortov B.A."/>
            <person name="Rivero F."/>
            <person name="Bankier A.T."/>
            <person name="Lehmann R."/>
            <person name="Hamlin N."/>
            <person name="Davies R."/>
            <person name="Gaudet P."/>
            <person name="Fey P."/>
            <person name="Pilcher K."/>
            <person name="Chen G."/>
            <person name="Saunders D."/>
            <person name="Sodergren E.J."/>
            <person name="Davis P."/>
            <person name="Kerhornou A."/>
            <person name="Nie X."/>
            <person name="Hall N."/>
            <person name="Anjard C."/>
            <person name="Hemphill L."/>
            <person name="Bason N."/>
            <person name="Farbrother P."/>
            <person name="Desany B."/>
            <person name="Just E."/>
            <person name="Morio T."/>
            <person name="Rost R."/>
            <person name="Churcher C.M."/>
            <person name="Cooper J."/>
            <person name="Haydock S."/>
            <person name="van Driessche N."/>
            <person name="Cronin A."/>
            <person name="Goodhead I."/>
            <person name="Muzny D.M."/>
            <person name="Mourier T."/>
            <person name="Pain A."/>
            <person name="Lu M."/>
            <person name="Harper D."/>
            <person name="Lindsay R."/>
            <person name="Hauser H."/>
            <person name="James K.D."/>
            <person name="Quiles M."/>
            <person name="Madan Babu M."/>
            <person name="Saito T."/>
            <person name="Buchrieser C."/>
            <person name="Wardroper A."/>
            <person name="Felder M."/>
            <person name="Thangavelu M."/>
            <person name="Johnson D."/>
            <person name="Knights A."/>
            <person name="Loulseged H."/>
            <person name="Mungall K.L."/>
            <person name="Oliver K."/>
            <person name="Price C."/>
            <person name="Quail M.A."/>
            <person name="Urushihara H."/>
            <person name="Hernandez J."/>
            <person name="Rabbinowitsch E."/>
            <person name="Steffen D."/>
            <person name="Sanders M."/>
            <person name="Ma J."/>
            <person name="Kohara Y."/>
            <person name="Sharp S."/>
            <person name="Simmonds M.N."/>
            <person name="Spiegler S."/>
            <person name="Tivey A."/>
            <person name="Sugano S."/>
            <person name="White B."/>
            <person name="Walker D."/>
            <person name="Woodward J.R."/>
            <person name="Winckler T."/>
            <person name="Tanaka Y."/>
            <person name="Shaulsky G."/>
            <person name="Schleicher M."/>
            <person name="Weinstock G.M."/>
            <person name="Rosenthal A."/>
            <person name="Cox E.C."/>
            <person name="Chisholm R.L."/>
            <person name="Gibbs R.A."/>
            <person name="Loomis W.F."/>
            <person name="Platzer M."/>
            <person name="Kay R.R."/>
            <person name="Williams J.G."/>
            <person name="Dear P.H."/>
            <person name="Noegel A.A."/>
            <person name="Barrell B.G."/>
            <person name="Kuspa A."/>
        </authorList>
    </citation>
    <scope>NUCLEOTIDE SEQUENCE [LARGE SCALE GENOMIC DNA]</scope>
    <source>
        <strain>AX4</strain>
    </source>
</reference>
<gene>
    <name type="primary">H2Bv2</name>
    <name type="ORF">DDB_G0276273</name>
</gene>
<feature type="chain" id="PRO_0000389159" description="Histone H2B.v2">
    <location>
        <begin position="1"/>
        <end position="474"/>
    </location>
</feature>
<feature type="region of interest" description="Disordered" evidence="1">
    <location>
        <begin position="99"/>
        <end position="123"/>
    </location>
</feature>
<feature type="region of interest" description="Disordered" evidence="1">
    <location>
        <begin position="276"/>
        <end position="295"/>
    </location>
</feature>
<feature type="region of interest" description="Disordered" evidence="1">
    <location>
        <begin position="328"/>
        <end position="394"/>
    </location>
</feature>
<feature type="compositionally biased region" description="Low complexity" evidence="1">
    <location>
        <begin position="100"/>
        <end position="110"/>
    </location>
</feature>
<feature type="compositionally biased region" description="Low complexity" evidence="1">
    <location>
        <begin position="276"/>
        <end position="286"/>
    </location>
</feature>
<feature type="compositionally biased region" description="Low complexity" evidence="1">
    <location>
        <begin position="329"/>
        <end position="368"/>
    </location>
</feature>
<organism>
    <name type="scientific">Dictyostelium discoideum</name>
    <name type="common">Social amoeba</name>
    <dbReference type="NCBI Taxonomy" id="44689"/>
    <lineage>
        <taxon>Eukaryota</taxon>
        <taxon>Amoebozoa</taxon>
        <taxon>Evosea</taxon>
        <taxon>Eumycetozoa</taxon>
        <taxon>Dictyostelia</taxon>
        <taxon>Dictyosteliales</taxon>
        <taxon>Dictyosteliaceae</taxon>
        <taxon>Dictyostelium</taxon>
    </lineage>
</organism>
<dbReference type="EMBL" id="AAFI02000014">
    <property type="protein sequence ID" value="EAL69283.1"/>
    <property type="molecule type" value="Genomic_DNA"/>
</dbReference>
<dbReference type="RefSeq" id="XP_643232.1">
    <property type="nucleotide sequence ID" value="XM_638140.1"/>
</dbReference>
<dbReference type="FunCoup" id="Q7KWR7">
    <property type="interactions" value="877"/>
</dbReference>
<dbReference type="PaxDb" id="44689-DDB0216304"/>
<dbReference type="EnsemblProtists" id="EAL69283">
    <property type="protein sequence ID" value="EAL69283"/>
    <property type="gene ID" value="DDB_G0276273"/>
</dbReference>
<dbReference type="GeneID" id="8620436"/>
<dbReference type="KEGG" id="ddi:DDB_G0276273"/>
<dbReference type="dictyBase" id="DDB_G0276273">
    <property type="gene designation" value="H2Bv2"/>
</dbReference>
<dbReference type="VEuPathDB" id="AmoebaDB:DDB_G0276273"/>
<dbReference type="eggNOG" id="ENOG502REEB">
    <property type="taxonomic scope" value="Eukaryota"/>
</dbReference>
<dbReference type="HOGENOM" id="CLU_576750_0_0_1"/>
<dbReference type="InParanoid" id="Q7KWR7"/>
<dbReference type="OMA" id="SHKHKTI"/>
<dbReference type="Reactome" id="R-DDI-2299718">
    <property type="pathway name" value="Condensation of Prophase Chromosomes"/>
</dbReference>
<dbReference type="Reactome" id="R-DDI-2559580">
    <property type="pathway name" value="Oxidative Stress Induced Senescence"/>
</dbReference>
<dbReference type="Reactome" id="R-DDI-3214815">
    <property type="pathway name" value="HDACs deacetylate histones"/>
</dbReference>
<dbReference type="Reactome" id="R-DDI-427359">
    <property type="pathway name" value="SIRT1 negatively regulates rRNA expression"/>
</dbReference>
<dbReference type="Reactome" id="R-DDI-5625886">
    <property type="pathway name" value="Activated PKN1 stimulates transcription of AR (androgen receptor) regulated genes KLK2 and KLK3"/>
</dbReference>
<dbReference type="Reactome" id="R-DDI-5689880">
    <property type="pathway name" value="Ub-specific processing proteases"/>
</dbReference>
<dbReference type="Reactome" id="R-DDI-5693565">
    <property type="pathway name" value="Recruitment and ATM-mediated phosphorylation of repair and signaling proteins at DNA double strand breaks"/>
</dbReference>
<dbReference type="Reactome" id="R-DDI-68616">
    <property type="pathway name" value="Assembly of the ORC complex at the origin of replication"/>
</dbReference>
<dbReference type="Reactome" id="R-DDI-73772">
    <property type="pathway name" value="RNA Polymerase I Promoter Escape"/>
</dbReference>
<dbReference type="Reactome" id="R-DDI-9843940">
    <property type="pathway name" value="Regulation of endogenous retroelements by KRAB-ZFP proteins"/>
</dbReference>
<dbReference type="PRO" id="PR:Q7KWR7"/>
<dbReference type="Proteomes" id="UP000002195">
    <property type="component" value="Chromosome 2"/>
</dbReference>
<dbReference type="GO" id="GO:0003677">
    <property type="term" value="F:DNA binding"/>
    <property type="evidence" value="ECO:0000318"/>
    <property type="project" value="GO_Central"/>
</dbReference>
<dbReference type="GO" id="GO:0046982">
    <property type="term" value="F:protein heterodimerization activity"/>
    <property type="evidence" value="ECO:0007669"/>
    <property type="project" value="InterPro"/>
</dbReference>
<dbReference type="Gene3D" id="1.10.20.10">
    <property type="entry name" value="Histone, subunit A"/>
    <property type="match status" value="1"/>
</dbReference>
<dbReference type="InterPro" id="IPR009072">
    <property type="entry name" value="Histone-fold"/>
</dbReference>
<dbReference type="SUPFAM" id="SSF47113">
    <property type="entry name" value="Histone-fold"/>
    <property type="match status" value="1"/>
</dbReference>
<proteinExistence type="inferred from homology"/>
<sequence>MESYSPSIQKLCVFLKPESDISNTGISYLNNFLADMSNAIIVESIHSSKSHKHKTILIEDIESALNVVFPSEIADSIINQSKGRIQSTSLKNLMQVKTFNNGGNNNNNNEQDNDLQEKEQNELSDDSDVEGFEIIPNNNNIYSHDVSLCFPIDLVCRVTLDYICRKKVIHQNPSDFYKVIEQQQSNHVIYTYISYALEVITTKILIKISSSTDLIDEDIIRKVIQDNHHLNSVRHKNIQASNIAGKLLDSSSSSNSNLQTSLSSSFIFSSSSNNTTTFTQQEQQEQFNDDKISGDEIEFEINNSKYLEKEDKKDQLIQKDEEIILKTFNDNNNNNNNNNNNNNNNNNNNNNNININNDNDNNNNNNKNNDNKNYDNNNNNNADKIEKLSPVNNNVKNSEIEKNIEKLKNINNNNNVEINEALISIIKETCKNIPSSSFSSVKNLKRSPPSLFKFKEPIDLVQVLAEGGIHMEAT</sequence>
<keyword id="KW-1185">Reference proteome</keyword>
<accession>Q7KWR7</accession>
<accession>Q551U5</accession>
<protein>
    <recommendedName>
        <fullName>Histone H2B.v2</fullName>
    </recommendedName>
</protein>
<name>H2BV2_DICDI</name>